<reference key="1">
    <citation type="submission" date="2008-05" db="EMBL/GenBank/DDBJ databases">
        <title>Complete sequence of chromosome of Geobacter lovleyi SZ.</title>
        <authorList>
            <consortium name="US DOE Joint Genome Institute"/>
            <person name="Lucas S."/>
            <person name="Copeland A."/>
            <person name="Lapidus A."/>
            <person name="Glavina del Rio T."/>
            <person name="Dalin E."/>
            <person name="Tice H."/>
            <person name="Bruce D."/>
            <person name="Goodwin L."/>
            <person name="Pitluck S."/>
            <person name="Chertkov O."/>
            <person name="Meincke L."/>
            <person name="Brettin T."/>
            <person name="Detter J.C."/>
            <person name="Han C."/>
            <person name="Tapia R."/>
            <person name="Kuske C.R."/>
            <person name="Schmutz J."/>
            <person name="Larimer F."/>
            <person name="Land M."/>
            <person name="Hauser L."/>
            <person name="Kyrpides N."/>
            <person name="Mikhailova N."/>
            <person name="Sung Y."/>
            <person name="Fletcher K.E."/>
            <person name="Ritalahti K.M."/>
            <person name="Loeffler F.E."/>
            <person name="Richardson P."/>
        </authorList>
    </citation>
    <scope>NUCLEOTIDE SEQUENCE [LARGE SCALE GENOMIC DNA]</scope>
    <source>
        <strain>ATCC BAA-1151 / DSM 17278 / SZ</strain>
    </source>
</reference>
<organism>
    <name type="scientific">Trichlorobacter lovleyi (strain ATCC BAA-1151 / DSM 17278 / SZ)</name>
    <name type="common">Geobacter lovleyi</name>
    <dbReference type="NCBI Taxonomy" id="398767"/>
    <lineage>
        <taxon>Bacteria</taxon>
        <taxon>Pseudomonadati</taxon>
        <taxon>Thermodesulfobacteriota</taxon>
        <taxon>Desulfuromonadia</taxon>
        <taxon>Geobacterales</taxon>
        <taxon>Geobacteraceae</taxon>
        <taxon>Trichlorobacter</taxon>
    </lineage>
</organism>
<proteinExistence type="inferred from homology"/>
<feature type="chain" id="PRO_1000091544" description="Serine hydroxymethyltransferase">
    <location>
        <begin position="1"/>
        <end position="415"/>
    </location>
</feature>
<feature type="binding site" evidence="1">
    <location>
        <position position="117"/>
    </location>
    <ligand>
        <name>(6S)-5,6,7,8-tetrahydrofolate</name>
        <dbReference type="ChEBI" id="CHEBI:57453"/>
    </ligand>
</feature>
<feature type="binding site" evidence="1">
    <location>
        <begin position="121"/>
        <end position="123"/>
    </location>
    <ligand>
        <name>(6S)-5,6,7,8-tetrahydrofolate</name>
        <dbReference type="ChEBI" id="CHEBI:57453"/>
    </ligand>
</feature>
<feature type="binding site" evidence="1">
    <location>
        <position position="241"/>
    </location>
    <ligand>
        <name>(6S)-5,6,7,8-tetrahydrofolate</name>
        <dbReference type="ChEBI" id="CHEBI:57453"/>
    </ligand>
</feature>
<feature type="binding site" evidence="1">
    <location>
        <begin position="349"/>
        <end position="351"/>
    </location>
    <ligand>
        <name>(6S)-5,6,7,8-tetrahydrofolate</name>
        <dbReference type="ChEBI" id="CHEBI:57453"/>
    </ligand>
</feature>
<feature type="site" description="Plays an important role in substrate specificity" evidence="1">
    <location>
        <position position="225"/>
    </location>
</feature>
<feature type="modified residue" description="N6-(pyridoxal phosphate)lysine" evidence="1">
    <location>
        <position position="226"/>
    </location>
</feature>
<gene>
    <name evidence="1" type="primary">glyA</name>
    <name type="ordered locus">Glov_1932</name>
</gene>
<name>GLYA_TRIL1</name>
<sequence length="415" mass="44916">MSILSQFDPAVAEAIQHETERQEYNLELIASENFVSEAVLEAQGSVMTNKYAEGYPGKRYYGGCHHVDVVENLAIERAKELFGAEHANVQPHAGSQANMAVYNAVCQPGDTILGMNLSHGGHLTHGSPVNFSGRFYNVVPYGVSPDTETIDYNEVERLALEHKPKMIVVGASAYPRIIDFPAFRAIADKVGAKVMVDMAHIAGLVAAGVHPNPVPYAEFVTTTTHKTLRGPRGGMILCREEYAKTINSQIFPGIQGGPLMHVIAAKAVAFKEALQPEFKTYQQQIVKNAAKLAECLMAKGFKLTSGGTDNHLMLINFTGTEITGKAAEEALDKAGITVNKNTVPFETRSPFVTSGIRVGTPACTSHGLKETEMEQVAGFIADAVANIGNDEALAAIQKRVNELMKKFPLYASRLK</sequence>
<dbReference type="EC" id="2.1.2.1" evidence="1"/>
<dbReference type="EMBL" id="CP001089">
    <property type="protein sequence ID" value="ACD95648.1"/>
    <property type="molecule type" value="Genomic_DNA"/>
</dbReference>
<dbReference type="RefSeq" id="WP_012469987.1">
    <property type="nucleotide sequence ID" value="NC_010814.1"/>
</dbReference>
<dbReference type="SMR" id="B3E1Z8"/>
<dbReference type="STRING" id="398767.Glov_1932"/>
<dbReference type="KEGG" id="glo:Glov_1932"/>
<dbReference type="eggNOG" id="COG0112">
    <property type="taxonomic scope" value="Bacteria"/>
</dbReference>
<dbReference type="HOGENOM" id="CLU_022477_2_1_7"/>
<dbReference type="OrthoDB" id="9803846at2"/>
<dbReference type="UniPathway" id="UPA00193"/>
<dbReference type="UniPathway" id="UPA00288">
    <property type="reaction ID" value="UER01023"/>
</dbReference>
<dbReference type="Proteomes" id="UP000002420">
    <property type="component" value="Chromosome"/>
</dbReference>
<dbReference type="GO" id="GO:0005829">
    <property type="term" value="C:cytosol"/>
    <property type="evidence" value="ECO:0007669"/>
    <property type="project" value="TreeGrafter"/>
</dbReference>
<dbReference type="GO" id="GO:0004372">
    <property type="term" value="F:glycine hydroxymethyltransferase activity"/>
    <property type="evidence" value="ECO:0007669"/>
    <property type="project" value="UniProtKB-UniRule"/>
</dbReference>
<dbReference type="GO" id="GO:0030170">
    <property type="term" value="F:pyridoxal phosphate binding"/>
    <property type="evidence" value="ECO:0007669"/>
    <property type="project" value="UniProtKB-UniRule"/>
</dbReference>
<dbReference type="GO" id="GO:0019264">
    <property type="term" value="P:glycine biosynthetic process from serine"/>
    <property type="evidence" value="ECO:0007669"/>
    <property type="project" value="UniProtKB-UniRule"/>
</dbReference>
<dbReference type="GO" id="GO:0035999">
    <property type="term" value="P:tetrahydrofolate interconversion"/>
    <property type="evidence" value="ECO:0007669"/>
    <property type="project" value="UniProtKB-UniRule"/>
</dbReference>
<dbReference type="CDD" id="cd00378">
    <property type="entry name" value="SHMT"/>
    <property type="match status" value="1"/>
</dbReference>
<dbReference type="FunFam" id="3.40.640.10:FF:000001">
    <property type="entry name" value="Serine hydroxymethyltransferase"/>
    <property type="match status" value="1"/>
</dbReference>
<dbReference type="FunFam" id="3.90.1150.10:FF:000003">
    <property type="entry name" value="Serine hydroxymethyltransferase"/>
    <property type="match status" value="1"/>
</dbReference>
<dbReference type="Gene3D" id="3.90.1150.10">
    <property type="entry name" value="Aspartate Aminotransferase, domain 1"/>
    <property type="match status" value="1"/>
</dbReference>
<dbReference type="Gene3D" id="3.40.640.10">
    <property type="entry name" value="Type I PLP-dependent aspartate aminotransferase-like (Major domain)"/>
    <property type="match status" value="1"/>
</dbReference>
<dbReference type="HAMAP" id="MF_00051">
    <property type="entry name" value="SHMT"/>
    <property type="match status" value="1"/>
</dbReference>
<dbReference type="InterPro" id="IPR015424">
    <property type="entry name" value="PyrdxlP-dep_Trfase"/>
</dbReference>
<dbReference type="InterPro" id="IPR015421">
    <property type="entry name" value="PyrdxlP-dep_Trfase_major"/>
</dbReference>
<dbReference type="InterPro" id="IPR015422">
    <property type="entry name" value="PyrdxlP-dep_Trfase_small"/>
</dbReference>
<dbReference type="InterPro" id="IPR001085">
    <property type="entry name" value="Ser_HO-MeTrfase"/>
</dbReference>
<dbReference type="InterPro" id="IPR049943">
    <property type="entry name" value="Ser_HO-MeTrfase-like"/>
</dbReference>
<dbReference type="InterPro" id="IPR019798">
    <property type="entry name" value="Ser_HO-MeTrfase_PLP_BS"/>
</dbReference>
<dbReference type="InterPro" id="IPR039429">
    <property type="entry name" value="SHMT-like_dom"/>
</dbReference>
<dbReference type="NCBIfam" id="NF000586">
    <property type="entry name" value="PRK00011.1"/>
    <property type="match status" value="1"/>
</dbReference>
<dbReference type="PANTHER" id="PTHR11680">
    <property type="entry name" value="SERINE HYDROXYMETHYLTRANSFERASE"/>
    <property type="match status" value="1"/>
</dbReference>
<dbReference type="PANTHER" id="PTHR11680:SF50">
    <property type="entry name" value="SERINE HYDROXYMETHYLTRANSFERASE"/>
    <property type="match status" value="1"/>
</dbReference>
<dbReference type="Pfam" id="PF00464">
    <property type="entry name" value="SHMT"/>
    <property type="match status" value="1"/>
</dbReference>
<dbReference type="PIRSF" id="PIRSF000412">
    <property type="entry name" value="SHMT"/>
    <property type="match status" value="1"/>
</dbReference>
<dbReference type="SUPFAM" id="SSF53383">
    <property type="entry name" value="PLP-dependent transferases"/>
    <property type="match status" value="1"/>
</dbReference>
<dbReference type="PROSITE" id="PS00096">
    <property type="entry name" value="SHMT"/>
    <property type="match status" value="1"/>
</dbReference>
<protein>
    <recommendedName>
        <fullName evidence="1">Serine hydroxymethyltransferase</fullName>
        <shortName evidence="1">SHMT</shortName>
        <shortName evidence="1">Serine methylase</shortName>
        <ecNumber evidence="1">2.1.2.1</ecNumber>
    </recommendedName>
</protein>
<accession>B3E1Z8</accession>
<evidence type="ECO:0000255" key="1">
    <source>
        <dbReference type="HAMAP-Rule" id="MF_00051"/>
    </source>
</evidence>
<keyword id="KW-0028">Amino-acid biosynthesis</keyword>
<keyword id="KW-0963">Cytoplasm</keyword>
<keyword id="KW-0554">One-carbon metabolism</keyword>
<keyword id="KW-0663">Pyridoxal phosphate</keyword>
<keyword id="KW-1185">Reference proteome</keyword>
<keyword id="KW-0808">Transferase</keyword>
<comment type="function">
    <text evidence="1">Catalyzes the reversible interconversion of serine and glycine with tetrahydrofolate (THF) serving as the one-carbon carrier. This reaction serves as the major source of one-carbon groups required for the biosynthesis of purines, thymidylate, methionine, and other important biomolecules. Also exhibits THF-independent aldolase activity toward beta-hydroxyamino acids, producing glycine and aldehydes, via a retro-aldol mechanism.</text>
</comment>
<comment type="catalytic activity">
    <reaction evidence="1">
        <text>(6R)-5,10-methylene-5,6,7,8-tetrahydrofolate + glycine + H2O = (6S)-5,6,7,8-tetrahydrofolate + L-serine</text>
        <dbReference type="Rhea" id="RHEA:15481"/>
        <dbReference type="ChEBI" id="CHEBI:15377"/>
        <dbReference type="ChEBI" id="CHEBI:15636"/>
        <dbReference type="ChEBI" id="CHEBI:33384"/>
        <dbReference type="ChEBI" id="CHEBI:57305"/>
        <dbReference type="ChEBI" id="CHEBI:57453"/>
        <dbReference type="EC" id="2.1.2.1"/>
    </reaction>
</comment>
<comment type="cofactor">
    <cofactor evidence="1">
        <name>pyridoxal 5'-phosphate</name>
        <dbReference type="ChEBI" id="CHEBI:597326"/>
    </cofactor>
</comment>
<comment type="pathway">
    <text evidence="1">One-carbon metabolism; tetrahydrofolate interconversion.</text>
</comment>
<comment type="pathway">
    <text evidence="1">Amino-acid biosynthesis; glycine biosynthesis; glycine from L-serine: step 1/1.</text>
</comment>
<comment type="subunit">
    <text evidence="1">Homodimer.</text>
</comment>
<comment type="subcellular location">
    <subcellularLocation>
        <location evidence="1">Cytoplasm</location>
    </subcellularLocation>
</comment>
<comment type="similarity">
    <text evidence="1">Belongs to the SHMT family.</text>
</comment>